<reference evidence="4 5" key="1">
    <citation type="journal article" date="2004" name="Gene">
        <title>TDPOZ, a family of bipartite animal and plant proteins that contain the TRAF (TD) and POZ/BTB domains.</title>
        <authorList>
            <person name="Huang C.-J."/>
            <person name="Chen C.-Y."/>
            <person name="Chen H.-H."/>
            <person name="Tsai S.-F."/>
            <person name="Choo K.-B."/>
        </authorList>
    </citation>
    <scope>NUCLEOTIDE SEQUENCE [GENOMIC DNA]</scope>
    <scope>DEVELOPMENTAL STAGE</scope>
    <source>
        <strain evidence="5">129/Sv</strain>
    </source>
</reference>
<reference key="2">
    <citation type="journal article" date="2009" name="PLoS Biol.">
        <title>Lineage-specific biology revealed by a finished genome assembly of the mouse.</title>
        <authorList>
            <person name="Church D.M."/>
            <person name="Goodstadt L."/>
            <person name="Hillier L.W."/>
            <person name="Zody M.C."/>
            <person name="Goldstein S."/>
            <person name="She X."/>
            <person name="Bult C.J."/>
            <person name="Agarwala R."/>
            <person name="Cherry J.L."/>
            <person name="DiCuccio M."/>
            <person name="Hlavina W."/>
            <person name="Kapustin Y."/>
            <person name="Meric P."/>
            <person name="Maglott D."/>
            <person name="Birtle Z."/>
            <person name="Marques A.C."/>
            <person name="Graves T."/>
            <person name="Zhou S."/>
            <person name="Teague B."/>
            <person name="Potamousis K."/>
            <person name="Churas C."/>
            <person name="Place M."/>
            <person name="Herschleb J."/>
            <person name="Runnheim R."/>
            <person name="Forrest D."/>
            <person name="Amos-Landgraf J."/>
            <person name="Schwartz D.C."/>
            <person name="Cheng Z."/>
            <person name="Lindblad-Toh K."/>
            <person name="Eichler E.E."/>
            <person name="Ponting C.P."/>
        </authorList>
    </citation>
    <scope>NUCLEOTIDE SEQUENCE [LARGE SCALE GENOMIC DNA]</scope>
    <source>
        <strain>C57BL/6J</strain>
    </source>
</reference>
<dbReference type="EMBL" id="AF545857">
    <property type="protein sequence ID" value="AAQ11976.1"/>
    <property type="molecule type" value="Genomic_DNA"/>
</dbReference>
<dbReference type="EMBL" id="AC170911">
    <property type="status" value="NOT_ANNOTATED_CDS"/>
    <property type="molecule type" value="Genomic_DNA"/>
</dbReference>
<dbReference type="CCDS" id="CCDS17586.1"/>
<dbReference type="RefSeq" id="NP_997154.2">
    <property type="nucleotide sequence ID" value="NM_207271.2"/>
</dbReference>
<dbReference type="SMR" id="Q717B4"/>
<dbReference type="BioGRID" id="240010">
    <property type="interactions" value="3"/>
</dbReference>
<dbReference type="FunCoup" id="Q717B4">
    <property type="interactions" value="106"/>
</dbReference>
<dbReference type="STRING" id="10090.ENSMUSP00000080472"/>
<dbReference type="iPTMnet" id="Q717B4"/>
<dbReference type="PhosphoSitePlus" id="Q717B4"/>
<dbReference type="PaxDb" id="10090-ENSMUSP00000080472"/>
<dbReference type="DNASU" id="399674"/>
<dbReference type="Ensembl" id="ENSMUST00000081780.4">
    <property type="protein sequence ID" value="ENSMUSP00000080472.4"/>
    <property type="gene ID" value="ENSMUSG00000058005.4"/>
</dbReference>
<dbReference type="GeneID" id="399674"/>
<dbReference type="KEGG" id="mmu:399674"/>
<dbReference type="UCSC" id="uc008qfo.1">
    <property type="organism name" value="mouse"/>
</dbReference>
<dbReference type="AGR" id="MGI:3027903"/>
<dbReference type="CTD" id="399674"/>
<dbReference type="MGI" id="MGI:3027903">
    <property type="gene designation" value="Tdpoz3"/>
</dbReference>
<dbReference type="VEuPathDB" id="HostDB:ENSMUSG00000058005"/>
<dbReference type="eggNOG" id="KOG1987">
    <property type="taxonomic scope" value="Eukaryota"/>
</dbReference>
<dbReference type="GeneTree" id="ENSGT00940000154376"/>
<dbReference type="HOGENOM" id="CLU_004253_2_0_1"/>
<dbReference type="InParanoid" id="Q717B4"/>
<dbReference type="OMA" id="GDKGTHE"/>
<dbReference type="OrthoDB" id="9620072at2759"/>
<dbReference type="PhylomeDB" id="Q717B4"/>
<dbReference type="TreeFam" id="TF313419"/>
<dbReference type="BioGRID-ORCS" id="399674">
    <property type="hits" value="11 hits in 75 CRISPR screens"/>
</dbReference>
<dbReference type="PRO" id="PR:Q717B4"/>
<dbReference type="Proteomes" id="UP000000589">
    <property type="component" value="Chromosome 3"/>
</dbReference>
<dbReference type="RNAct" id="Q717B4">
    <property type="molecule type" value="protein"/>
</dbReference>
<dbReference type="Bgee" id="ENSMUSG00000058005">
    <property type="expression patterns" value="Expressed in duodenum"/>
</dbReference>
<dbReference type="GO" id="GO:0030163">
    <property type="term" value="P:protein catabolic process"/>
    <property type="evidence" value="ECO:0007669"/>
    <property type="project" value="UniProtKB-ARBA"/>
</dbReference>
<dbReference type="CDD" id="cd18521">
    <property type="entry name" value="BACK_Tdpoz"/>
    <property type="match status" value="1"/>
</dbReference>
<dbReference type="CDD" id="cd18344">
    <property type="entry name" value="BTB_POZ_TDPOZ"/>
    <property type="match status" value="1"/>
</dbReference>
<dbReference type="FunFam" id="3.30.710.10:FF:000147">
    <property type="entry name" value="Predicted gene 4858"/>
    <property type="match status" value="1"/>
</dbReference>
<dbReference type="FunFam" id="2.60.210.10:FF:000003">
    <property type="entry name" value="Speckle-type POZ protein-like a"/>
    <property type="match status" value="1"/>
</dbReference>
<dbReference type="Gene3D" id="6.10.250.3030">
    <property type="match status" value="1"/>
</dbReference>
<dbReference type="Gene3D" id="6.20.250.50">
    <property type="match status" value="1"/>
</dbReference>
<dbReference type="Gene3D" id="2.60.210.10">
    <property type="entry name" value="Apoptosis, Tumor Necrosis Factor Receptor Associated Protein 2, Chain A"/>
    <property type="match status" value="1"/>
</dbReference>
<dbReference type="Gene3D" id="3.30.710.10">
    <property type="entry name" value="Potassium Channel Kv1.1, Chain A"/>
    <property type="match status" value="1"/>
</dbReference>
<dbReference type="InterPro" id="IPR000210">
    <property type="entry name" value="BTB/POZ_dom"/>
</dbReference>
<dbReference type="InterPro" id="IPR002083">
    <property type="entry name" value="MATH/TRAF_dom"/>
</dbReference>
<dbReference type="InterPro" id="IPR011333">
    <property type="entry name" value="SKP1/BTB/POZ_sf"/>
</dbReference>
<dbReference type="InterPro" id="IPR008974">
    <property type="entry name" value="TRAF-like"/>
</dbReference>
<dbReference type="PANTHER" id="PTHR24413">
    <property type="entry name" value="SPECKLE-TYPE POZ PROTEIN"/>
    <property type="match status" value="1"/>
</dbReference>
<dbReference type="Pfam" id="PF00651">
    <property type="entry name" value="BTB"/>
    <property type="match status" value="1"/>
</dbReference>
<dbReference type="Pfam" id="PF22486">
    <property type="entry name" value="MATH_2"/>
    <property type="match status" value="1"/>
</dbReference>
<dbReference type="SMART" id="SM00225">
    <property type="entry name" value="BTB"/>
    <property type="match status" value="1"/>
</dbReference>
<dbReference type="SMART" id="SM00061">
    <property type="entry name" value="MATH"/>
    <property type="match status" value="1"/>
</dbReference>
<dbReference type="SUPFAM" id="SSF54695">
    <property type="entry name" value="POZ domain"/>
    <property type="match status" value="1"/>
</dbReference>
<dbReference type="SUPFAM" id="SSF49599">
    <property type="entry name" value="TRAF domain-like"/>
    <property type="match status" value="1"/>
</dbReference>
<dbReference type="PROSITE" id="PS50097">
    <property type="entry name" value="BTB"/>
    <property type="match status" value="1"/>
</dbReference>
<dbReference type="PROSITE" id="PS50144">
    <property type="entry name" value="MATH"/>
    <property type="match status" value="1"/>
</dbReference>
<proteinExistence type="evidence at transcript level"/>
<evidence type="ECO:0000255" key="1">
    <source>
        <dbReference type="PROSITE-ProRule" id="PRU00037"/>
    </source>
</evidence>
<evidence type="ECO:0000255" key="2">
    <source>
        <dbReference type="PROSITE-ProRule" id="PRU00129"/>
    </source>
</evidence>
<evidence type="ECO:0000269" key="3">
    <source>
    </source>
</evidence>
<evidence type="ECO:0000305" key="4"/>
<evidence type="ECO:0000312" key="5">
    <source>
        <dbReference type="EMBL" id="AAQ11976.1"/>
    </source>
</evidence>
<organism>
    <name type="scientific">Mus musculus</name>
    <name type="common">Mouse</name>
    <dbReference type="NCBI Taxonomy" id="10090"/>
    <lineage>
        <taxon>Eukaryota</taxon>
        <taxon>Metazoa</taxon>
        <taxon>Chordata</taxon>
        <taxon>Craniata</taxon>
        <taxon>Vertebrata</taxon>
        <taxon>Euteleostomi</taxon>
        <taxon>Mammalia</taxon>
        <taxon>Eutheria</taxon>
        <taxon>Euarchontoglires</taxon>
        <taxon>Glires</taxon>
        <taxon>Rodentia</taxon>
        <taxon>Myomorpha</taxon>
        <taxon>Muroidea</taxon>
        <taxon>Muridae</taxon>
        <taxon>Murinae</taxon>
        <taxon>Mus</taxon>
        <taxon>Mus</taxon>
    </lineage>
</organism>
<gene>
    <name evidence="5" type="primary">Tdpoz3</name>
</gene>
<sequence>MAGDMEFKSWGYTQINVQKFCYNWTISNFSFCMGAHQKSITSPVFSLEASKEVAWCLRLYPNGVDEESKDYLSVYLELLSALESPILAKFEFWIINSQGEKYQSRKISNVQCFLQYEHRGFKKFLLRGLLLSHMNWFLPEDQFTICCKVSIVGTVFDMPVQKRTPAIKDPRHMLTDDLGELWENSLFTDCCLLVAGHEFKAHKAILAARSPVFRAMFENEMKESLKNPIEIMDLDLDVFKEMMGFIYTGKAPHLHSHSMACDVLPAADKYGLVGLKVLCEDVLCRNLSVKTAAHTLILADLNSTEKLKSQALDFIAIHACEVSETSEWKSMWKSHPHLVAEAFHSLASAKCSFLEPNVVLESSQL</sequence>
<name>TDPZ3_MOUSE</name>
<keyword id="KW-1185">Reference proteome</keyword>
<accession>Q717B4</accession>
<accession>E9QKH5</accession>
<protein>
    <recommendedName>
        <fullName>TD and POZ domain-containing protein 3</fullName>
    </recommendedName>
</protein>
<feature type="chain" id="PRO_0000191625" description="TD and POZ domain-containing protein 3">
    <location>
        <begin position="1"/>
        <end position="365"/>
    </location>
</feature>
<feature type="domain" description="MATH" evidence="2">
    <location>
        <begin position="19"/>
        <end position="149"/>
    </location>
</feature>
<feature type="domain" description="BTB" evidence="1">
    <location>
        <begin position="188"/>
        <end position="250"/>
    </location>
</feature>
<feature type="sequence conflict" description="In Ref. 1; AAQ11976." evidence="4" ref="1">
    <original>M</original>
    <variation>Q</variation>
    <location>
        <position position="134"/>
    </location>
</feature>
<feature type="sequence conflict" description="In Ref. 1; AAQ11976." evidence="4" ref="1">
    <original>V</original>
    <variation>G</variation>
    <location>
        <position position="160"/>
    </location>
</feature>
<feature type="sequence conflict" description="In Ref. 1; AAQ11976." evidence="4" ref="1">
    <original>E</original>
    <variation>D</variation>
    <location>
        <position position="183"/>
    </location>
</feature>
<feature type="sequence conflict" description="In Ref. 1; AAQ11976." evidence="4" ref="1">
    <original>N</original>
    <variation>H</variation>
    <location>
        <position position="219"/>
    </location>
</feature>
<feature type="sequence conflict" description="In Ref. 1; AAQ11976." evidence="4" ref="1">
    <original>T</original>
    <variation>N</variation>
    <location>
        <position position="291"/>
    </location>
</feature>
<feature type="sequence conflict" description="In Ref. 1; AAQ11976." evidence="4" ref="1">
    <original>D</original>
    <variation>E</variation>
    <location>
        <position position="300"/>
    </location>
</feature>
<comment type="developmental stage">
    <text evidence="3">Strongly expressed in 2-cell embryos with weak expression detected in other embryonic stages. Also weakly expressed in adult testis.</text>
</comment>
<comment type="similarity">
    <text evidence="4">Belongs to the Tdpoz family.</text>
</comment>